<name>RL14_IDILO</name>
<evidence type="ECO:0000255" key="1">
    <source>
        <dbReference type="HAMAP-Rule" id="MF_01367"/>
    </source>
</evidence>
<evidence type="ECO:0000305" key="2"/>
<protein>
    <recommendedName>
        <fullName evidence="1">Large ribosomal subunit protein uL14</fullName>
    </recommendedName>
    <alternativeName>
        <fullName evidence="2">50S ribosomal protein L14</fullName>
    </alternativeName>
</protein>
<organism>
    <name type="scientific">Idiomarina loihiensis (strain ATCC BAA-735 / DSM 15497 / L2-TR)</name>
    <dbReference type="NCBI Taxonomy" id="283942"/>
    <lineage>
        <taxon>Bacteria</taxon>
        <taxon>Pseudomonadati</taxon>
        <taxon>Pseudomonadota</taxon>
        <taxon>Gammaproteobacteria</taxon>
        <taxon>Alteromonadales</taxon>
        <taxon>Idiomarinaceae</taxon>
        <taxon>Idiomarina</taxon>
    </lineage>
</organism>
<feature type="chain" id="PRO_0000266497" description="Large ribosomal subunit protein uL14">
    <location>
        <begin position="1"/>
        <end position="122"/>
    </location>
</feature>
<accession>Q5QXW8</accession>
<comment type="function">
    <text evidence="1">Binds to 23S rRNA. Forms part of two intersubunit bridges in the 70S ribosome.</text>
</comment>
<comment type="subunit">
    <text evidence="1">Part of the 50S ribosomal subunit. Forms a cluster with proteins L3 and L19. In the 70S ribosome, L14 and L19 interact and together make contacts with the 16S rRNA in bridges B5 and B8.</text>
</comment>
<comment type="similarity">
    <text evidence="1">Belongs to the universal ribosomal protein uL14 family.</text>
</comment>
<dbReference type="EMBL" id="AE017340">
    <property type="protein sequence ID" value="AAV82738.1"/>
    <property type="molecule type" value="Genomic_DNA"/>
</dbReference>
<dbReference type="RefSeq" id="WP_006956444.1">
    <property type="nucleotide sequence ID" value="NC_006512.1"/>
</dbReference>
<dbReference type="SMR" id="Q5QXW8"/>
<dbReference type="STRING" id="283942.IL1906"/>
<dbReference type="GeneID" id="78252626"/>
<dbReference type="KEGG" id="ilo:IL1906"/>
<dbReference type="eggNOG" id="COG0093">
    <property type="taxonomic scope" value="Bacteria"/>
</dbReference>
<dbReference type="HOGENOM" id="CLU_095071_2_1_6"/>
<dbReference type="OrthoDB" id="9806379at2"/>
<dbReference type="Proteomes" id="UP000001171">
    <property type="component" value="Chromosome"/>
</dbReference>
<dbReference type="GO" id="GO:0022625">
    <property type="term" value="C:cytosolic large ribosomal subunit"/>
    <property type="evidence" value="ECO:0007669"/>
    <property type="project" value="TreeGrafter"/>
</dbReference>
<dbReference type="GO" id="GO:0070180">
    <property type="term" value="F:large ribosomal subunit rRNA binding"/>
    <property type="evidence" value="ECO:0007669"/>
    <property type="project" value="TreeGrafter"/>
</dbReference>
<dbReference type="GO" id="GO:0003735">
    <property type="term" value="F:structural constituent of ribosome"/>
    <property type="evidence" value="ECO:0007669"/>
    <property type="project" value="InterPro"/>
</dbReference>
<dbReference type="GO" id="GO:0006412">
    <property type="term" value="P:translation"/>
    <property type="evidence" value="ECO:0007669"/>
    <property type="project" value="UniProtKB-UniRule"/>
</dbReference>
<dbReference type="CDD" id="cd00337">
    <property type="entry name" value="Ribosomal_uL14"/>
    <property type="match status" value="1"/>
</dbReference>
<dbReference type="FunFam" id="2.40.150.20:FF:000001">
    <property type="entry name" value="50S ribosomal protein L14"/>
    <property type="match status" value="1"/>
</dbReference>
<dbReference type="Gene3D" id="2.40.150.20">
    <property type="entry name" value="Ribosomal protein L14"/>
    <property type="match status" value="1"/>
</dbReference>
<dbReference type="HAMAP" id="MF_01367">
    <property type="entry name" value="Ribosomal_uL14"/>
    <property type="match status" value="1"/>
</dbReference>
<dbReference type="InterPro" id="IPR000218">
    <property type="entry name" value="Ribosomal_uL14"/>
</dbReference>
<dbReference type="InterPro" id="IPR005745">
    <property type="entry name" value="Ribosomal_uL14_bac-type"/>
</dbReference>
<dbReference type="InterPro" id="IPR019972">
    <property type="entry name" value="Ribosomal_uL14_CS"/>
</dbReference>
<dbReference type="InterPro" id="IPR036853">
    <property type="entry name" value="Ribosomal_uL14_sf"/>
</dbReference>
<dbReference type="NCBIfam" id="TIGR01067">
    <property type="entry name" value="rplN_bact"/>
    <property type="match status" value="1"/>
</dbReference>
<dbReference type="PANTHER" id="PTHR11761">
    <property type="entry name" value="50S/60S RIBOSOMAL PROTEIN L14/L23"/>
    <property type="match status" value="1"/>
</dbReference>
<dbReference type="PANTHER" id="PTHR11761:SF3">
    <property type="entry name" value="LARGE RIBOSOMAL SUBUNIT PROTEIN UL14M"/>
    <property type="match status" value="1"/>
</dbReference>
<dbReference type="Pfam" id="PF00238">
    <property type="entry name" value="Ribosomal_L14"/>
    <property type="match status" value="1"/>
</dbReference>
<dbReference type="SMART" id="SM01374">
    <property type="entry name" value="Ribosomal_L14"/>
    <property type="match status" value="1"/>
</dbReference>
<dbReference type="SUPFAM" id="SSF50193">
    <property type="entry name" value="Ribosomal protein L14"/>
    <property type="match status" value="1"/>
</dbReference>
<dbReference type="PROSITE" id="PS00049">
    <property type="entry name" value="RIBOSOMAL_L14"/>
    <property type="match status" value="1"/>
</dbReference>
<proteinExistence type="inferred from homology"/>
<gene>
    <name evidence="1" type="primary">rplN</name>
    <name type="ordered locus">IL1906</name>
</gene>
<sequence length="122" mass="13495">MIQMQTTLDVADNSGARSVQCIKVLGGSHRRYANIGDIIKVTVKEAIPRGKVKKGDVVNAVVVRTRKGVRRQDGSVIRFDRNAAVLLNNNQQPIGTRIFGPVTRELRSEQFMKIISLAPEVL</sequence>
<reference key="1">
    <citation type="journal article" date="2004" name="Proc. Natl. Acad. Sci. U.S.A.">
        <title>Genome sequence of the deep-sea gamma-proteobacterium Idiomarina loihiensis reveals amino acid fermentation as a source of carbon and energy.</title>
        <authorList>
            <person name="Hou S."/>
            <person name="Saw J.H."/>
            <person name="Lee K.S."/>
            <person name="Freitas T.A."/>
            <person name="Belisle C."/>
            <person name="Kawarabayasi Y."/>
            <person name="Donachie S.P."/>
            <person name="Pikina A."/>
            <person name="Galperin M.Y."/>
            <person name="Koonin E.V."/>
            <person name="Makarova K.S."/>
            <person name="Omelchenko M.V."/>
            <person name="Sorokin A."/>
            <person name="Wolf Y.I."/>
            <person name="Li Q.X."/>
            <person name="Keum Y.S."/>
            <person name="Campbell S."/>
            <person name="Denery J."/>
            <person name="Aizawa S."/>
            <person name="Shibata S."/>
            <person name="Malahoff A."/>
            <person name="Alam M."/>
        </authorList>
    </citation>
    <scope>NUCLEOTIDE SEQUENCE [LARGE SCALE GENOMIC DNA]</scope>
    <source>
        <strain>ATCC BAA-735 / DSM 15497 / L2-TR</strain>
    </source>
</reference>
<keyword id="KW-1185">Reference proteome</keyword>
<keyword id="KW-0687">Ribonucleoprotein</keyword>
<keyword id="KW-0689">Ribosomal protein</keyword>
<keyword id="KW-0694">RNA-binding</keyword>
<keyword id="KW-0699">rRNA-binding</keyword>